<protein>
    <recommendedName>
        <fullName evidence="1">Fatty acid oxidation complex subunit alpha</fullName>
    </recommendedName>
    <domain>
        <recommendedName>
            <fullName evidence="1">Enoyl-CoA hydratase/3-hydroxybutyryl-CoA epimerase</fullName>
            <ecNumber evidence="1">4.2.1.17</ecNumber>
            <ecNumber evidence="1">5.1.2.3</ecNumber>
        </recommendedName>
    </domain>
    <domain>
        <recommendedName>
            <fullName evidence="1">3-hydroxyacyl-CoA dehydrogenase</fullName>
            <ecNumber evidence="1">1.1.1.35</ecNumber>
        </recommendedName>
    </domain>
</protein>
<keyword id="KW-0963">Cytoplasm</keyword>
<keyword id="KW-0276">Fatty acid metabolism</keyword>
<keyword id="KW-0413">Isomerase</keyword>
<keyword id="KW-0442">Lipid degradation</keyword>
<keyword id="KW-0443">Lipid metabolism</keyword>
<keyword id="KW-0456">Lyase</keyword>
<keyword id="KW-0511">Multifunctional enzyme</keyword>
<keyword id="KW-0520">NAD</keyword>
<keyword id="KW-0560">Oxidoreductase</keyword>
<dbReference type="EC" id="4.2.1.17" evidence="1"/>
<dbReference type="EC" id="5.1.2.3" evidence="1"/>
<dbReference type="EC" id="1.1.1.35" evidence="1"/>
<dbReference type="EMBL" id="BA000031">
    <property type="protein sequence ID" value="BAC60471.1"/>
    <property type="molecule type" value="Genomic_DNA"/>
</dbReference>
<dbReference type="RefSeq" id="NP_798587.1">
    <property type="nucleotide sequence ID" value="NC_004603.1"/>
</dbReference>
<dbReference type="RefSeq" id="WP_005479507.1">
    <property type="nucleotide sequence ID" value="NC_004603.1"/>
</dbReference>
<dbReference type="SMR" id="Q87MM3"/>
<dbReference type="GeneID" id="1189721"/>
<dbReference type="KEGG" id="vpa:VP2208"/>
<dbReference type="PATRIC" id="fig|223926.6.peg.2111"/>
<dbReference type="eggNOG" id="COG1024">
    <property type="taxonomic scope" value="Bacteria"/>
</dbReference>
<dbReference type="eggNOG" id="COG1250">
    <property type="taxonomic scope" value="Bacteria"/>
</dbReference>
<dbReference type="HOGENOM" id="CLU_009834_16_1_6"/>
<dbReference type="UniPathway" id="UPA00659"/>
<dbReference type="Proteomes" id="UP000002493">
    <property type="component" value="Chromosome 1"/>
</dbReference>
<dbReference type="GO" id="GO:0005737">
    <property type="term" value="C:cytoplasm"/>
    <property type="evidence" value="ECO:0007669"/>
    <property type="project" value="UniProtKB-SubCell"/>
</dbReference>
<dbReference type="GO" id="GO:0008692">
    <property type="term" value="F:3-hydroxybutyryl-CoA epimerase activity"/>
    <property type="evidence" value="ECO:0007669"/>
    <property type="project" value="UniProtKB-UniRule"/>
</dbReference>
<dbReference type="GO" id="GO:0004300">
    <property type="term" value="F:enoyl-CoA hydratase activity"/>
    <property type="evidence" value="ECO:0007669"/>
    <property type="project" value="UniProtKB-UniRule"/>
</dbReference>
<dbReference type="GO" id="GO:0016509">
    <property type="term" value="F:long-chain-3-hydroxyacyl-CoA dehydrogenase activity"/>
    <property type="evidence" value="ECO:0007669"/>
    <property type="project" value="TreeGrafter"/>
</dbReference>
<dbReference type="GO" id="GO:0070403">
    <property type="term" value="F:NAD+ binding"/>
    <property type="evidence" value="ECO:0007669"/>
    <property type="project" value="InterPro"/>
</dbReference>
<dbReference type="GO" id="GO:0006635">
    <property type="term" value="P:fatty acid beta-oxidation"/>
    <property type="evidence" value="ECO:0007669"/>
    <property type="project" value="UniProtKB-UniRule"/>
</dbReference>
<dbReference type="CDD" id="cd06558">
    <property type="entry name" value="crotonase-like"/>
    <property type="match status" value="1"/>
</dbReference>
<dbReference type="FunFam" id="3.90.226.10:FF:000011">
    <property type="entry name" value="Fatty acid oxidation complex subunit alpha"/>
    <property type="match status" value="1"/>
</dbReference>
<dbReference type="FunFam" id="3.40.50.720:FF:000009">
    <property type="entry name" value="Fatty oxidation complex, alpha subunit"/>
    <property type="match status" value="1"/>
</dbReference>
<dbReference type="Gene3D" id="1.10.1040.50">
    <property type="match status" value="1"/>
</dbReference>
<dbReference type="Gene3D" id="3.90.226.10">
    <property type="entry name" value="2-enoyl-CoA Hydratase, Chain A, domain 1"/>
    <property type="match status" value="1"/>
</dbReference>
<dbReference type="Gene3D" id="3.40.50.720">
    <property type="entry name" value="NAD(P)-binding Rossmann-like Domain"/>
    <property type="match status" value="1"/>
</dbReference>
<dbReference type="HAMAP" id="MF_01617">
    <property type="entry name" value="FadJ"/>
    <property type="match status" value="1"/>
</dbReference>
<dbReference type="InterPro" id="IPR006180">
    <property type="entry name" value="3-OHacyl-CoA_DH_CS"/>
</dbReference>
<dbReference type="InterPro" id="IPR006176">
    <property type="entry name" value="3-OHacyl-CoA_DH_NAD-bd"/>
</dbReference>
<dbReference type="InterPro" id="IPR006108">
    <property type="entry name" value="3HC_DH_C"/>
</dbReference>
<dbReference type="InterPro" id="IPR008927">
    <property type="entry name" value="6-PGluconate_DH-like_C_sf"/>
</dbReference>
<dbReference type="InterPro" id="IPR029045">
    <property type="entry name" value="ClpP/crotonase-like_dom_sf"/>
</dbReference>
<dbReference type="InterPro" id="IPR018376">
    <property type="entry name" value="Enoyl-CoA_hyd/isom_CS"/>
</dbReference>
<dbReference type="InterPro" id="IPR001753">
    <property type="entry name" value="Enoyl-CoA_hydra/iso"/>
</dbReference>
<dbReference type="InterPro" id="IPR050136">
    <property type="entry name" value="FA_oxidation_alpha_subunit"/>
</dbReference>
<dbReference type="InterPro" id="IPR012802">
    <property type="entry name" value="FadJ"/>
</dbReference>
<dbReference type="InterPro" id="IPR036291">
    <property type="entry name" value="NAD(P)-bd_dom_sf"/>
</dbReference>
<dbReference type="NCBIfam" id="TIGR02440">
    <property type="entry name" value="FadJ"/>
    <property type="match status" value="1"/>
</dbReference>
<dbReference type="NCBIfam" id="NF008363">
    <property type="entry name" value="PRK11154.1"/>
    <property type="match status" value="1"/>
</dbReference>
<dbReference type="PANTHER" id="PTHR43612">
    <property type="entry name" value="TRIFUNCTIONAL ENZYME SUBUNIT ALPHA"/>
    <property type="match status" value="1"/>
</dbReference>
<dbReference type="PANTHER" id="PTHR43612:SF3">
    <property type="entry name" value="TRIFUNCTIONAL ENZYME SUBUNIT ALPHA, MITOCHONDRIAL"/>
    <property type="match status" value="1"/>
</dbReference>
<dbReference type="Pfam" id="PF00725">
    <property type="entry name" value="3HCDH"/>
    <property type="match status" value="2"/>
</dbReference>
<dbReference type="Pfam" id="PF02737">
    <property type="entry name" value="3HCDH_N"/>
    <property type="match status" value="1"/>
</dbReference>
<dbReference type="Pfam" id="PF00378">
    <property type="entry name" value="ECH_1"/>
    <property type="match status" value="1"/>
</dbReference>
<dbReference type="SUPFAM" id="SSF48179">
    <property type="entry name" value="6-phosphogluconate dehydrogenase C-terminal domain-like"/>
    <property type="match status" value="2"/>
</dbReference>
<dbReference type="SUPFAM" id="SSF52096">
    <property type="entry name" value="ClpP/crotonase"/>
    <property type="match status" value="1"/>
</dbReference>
<dbReference type="SUPFAM" id="SSF51735">
    <property type="entry name" value="NAD(P)-binding Rossmann-fold domains"/>
    <property type="match status" value="1"/>
</dbReference>
<dbReference type="PROSITE" id="PS00067">
    <property type="entry name" value="3HCDH"/>
    <property type="match status" value="1"/>
</dbReference>
<dbReference type="PROSITE" id="PS00166">
    <property type="entry name" value="ENOYL_COA_HYDRATASE"/>
    <property type="match status" value="1"/>
</dbReference>
<gene>
    <name evidence="1" type="primary">fadJ</name>
    <name type="ordered locus">VP2208</name>
</gene>
<reference key="1">
    <citation type="journal article" date="2003" name="Lancet">
        <title>Genome sequence of Vibrio parahaemolyticus: a pathogenic mechanism distinct from that of V. cholerae.</title>
        <authorList>
            <person name="Makino K."/>
            <person name="Oshima K."/>
            <person name="Kurokawa K."/>
            <person name="Yokoyama K."/>
            <person name="Uda T."/>
            <person name="Tagomori K."/>
            <person name="Iijima Y."/>
            <person name="Najima M."/>
            <person name="Nakano M."/>
            <person name="Yamashita A."/>
            <person name="Kubota Y."/>
            <person name="Kimura S."/>
            <person name="Yasunaga T."/>
            <person name="Honda T."/>
            <person name="Shinagawa H."/>
            <person name="Hattori M."/>
            <person name="Iida T."/>
        </authorList>
    </citation>
    <scope>NUCLEOTIDE SEQUENCE [LARGE SCALE GENOMIC DNA]</scope>
    <source>
        <strain>RIMD 2210633</strain>
    </source>
</reference>
<evidence type="ECO:0000255" key="1">
    <source>
        <dbReference type="HAMAP-Rule" id="MF_01617"/>
    </source>
</evidence>
<proteinExistence type="inferred from homology"/>
<organism>
    <name type="scientific">Vibrio parahaemolyticus serotype O3:K6 (strain RIMD 2210633)</name>
    <dbReference type="NCBI Taxonomy" id="223926"/>
    <lineage>
        <taxon>Bacteria</taxon>
        <taxon>Pseudomonadati</taxon>
        <taxon>Pseudomonadota</taxon>
        <taxon>Gammaproteobacteria</taxon>
        <taxon>Vibrionales</taxon>
        <taxon>Vibrionaceae</taxon>
        <taxon>Vibrio</taxon>
    </lineage>
</organism>
<sequence>MSEQKAFSLNVDEQNIAWLAIDVPNEKMNTLQAAFADEMKEIFAQLKDSSGIKGMIIHSLKPDNFVAGADVRMLEACTTANEAQALAKQGQELFQQLSDLPYPVVAAIHGPCLGGGLELALACDYRVCTDFDKTRLGLPEVQLGLLPGSGGTQRLPRLIGLLPSLDLILTGKQLRAKKAKKLGVVDACVPDTILLDVAKQFIDKGKNKGKKKQSTKEKLMSGSGLGRKLVFEQAAKKTNQKTRGNYPATVAILEVIQHGLEKGFAQGQELEAKRFGELVMSSESKALRSIFFATTEMKKEHGTDAQPAAVKKVGVLGGGLMGAGISHVTVAKAKVPVRIKDVSNDGVLNALNYNYKLFEKQRKRRILSKADLQAKMLQLSGGVDFTSYNHIDVVIEAVFEDLDLKQQMVADIEANAKSETIFATNTSSLPIHKIAEKAERPENIVGLHYFSPVEKMPLVEVIPHETTSDETISTVVALAKKQGKTPIVVKDKAGFYVNRILAPYMNEAAHILLANEPIEKLDGALLDFGFPVGPITLLDEVGVDIGAKIMPILVNELGERFKGPDVFDILLNDGRKGRKSGKGFYTYKGKKKEVDKSIYKLLKLTPESKLSDNDIALRCVLPMLNEAVRCLDDGIIRSPRDGDIGAIFGIGFPPFLGGPFRYMDQFGLKELVEKMNEFASKYGDRYAPCDGLLTRAGEGRTFY</sequence>
<comment type="function">
    <text evidence="1">Catalyzes the formation of a hydroxyacyl-CoA by addition of water on enoyl-CoA. Also exhibits 3-hydroxyacyl-CoA epimerase and 3-hydroxyacyl-CoA dehydrogenase activities.</text>
</comment>
<comment type="catalytic activity">
    <reaction evidence="1">
        <text>a (3S)-3-hydroxyacyl-CoA = a (2E)-enoyl-CoA + H2O</text>
        <dbReference type="Rhea" id="RHEA:16105"/>
        <dbReference type="ChEBI" id="CHEBI:15377"/>
        <dbReference type="ChEBI" id="CHEBI:57318"/>
        <dbReference type="ChEBI" id="CHEBI:58856"/>
        <dbReference type="EC" id="4.2.1.17"/>
    </reaction>
</comment>
<comment type="catalytic activity">
    <reaction evidence="1">
        <text>a 4-saturated-(3S)-3-hydroxyacyl-CoA = a (3E)-enoyl-CoA + H2O</text>
        <dbReference type="Rhea" id="RHEA:20724"/>
        <dbReference type="ChEBI" id="CHEBI:15377"/>
        <dbReference type="ChEBI" id="CHEBI:58521"/>
        <dbReference type="ChEBI" id="CHEBI:137480"/>
        <dbReference type="EC" id="4.2.1.17"/>
    </reaction>
</comment>
<comment type="catalytic activity">
    <reaction evidence="1">
        <text>a (3S)-3-hydroxyacyl-CoA + NAD(+) = a 3-oxoacyl-CoA + NADH + H(+)</text>
        <dbReference type="Rhea" id="RHEA:22432"/>
        <dbReference type="ChEBI" id="CHEBI:15378"/>
        <dbReference type="ChEBI" id="CHEBI:57318"/>
        <dbReference type="ChEBI" id="CHEBI:57540"/>
        <dbReference type="ChEBI" id="CHEBI:57945"/>
        <dbReference type="ChEBI" id="CHEBI:90726"/>
        <dbReference type="EC" id="1.1.1.35"/>
    </reaction>
</comment>
<comment type="catalytic activity">
    <reaction evidence="1">
        <text>(3S)-3-hydroxybutanoyl-CoA = (3R)-3-hydroxybutanoyl-CoA</text>
        <dbReference type="Rhea" id="RHEA:21760"/>
        <dbReference type="ChEBI" id="CHEBI:57315"/>
        <dbReference type="ChEBI" id="CHEBI:57316"/>
        <dbReference type="EC" id="5.1.2.3"/>
    </reaction>
</comment>
<comment type="pathway">
    <text evidence="1">Lipid metabolism; fatty acid beta-oxidation.</text>
</comment>
<comment type="subunit">
    <text evidence="1">Heterotetramer of two alpha chains (FadJ) and two beta chains (FadI).</text>
</comment>
<comment type="subcellular location">
    <subcellularLocation>
        <location evidence="1">Cytoplasm</location>
    </subcellularLocation>
</comment>
<comment type="similarity">
    <text evidence="1">In the N-terminal section; belongs to the enoyl-CoA hydratase/isomerase family.</text>
</comment>
<comment type="similarity">
    <text evidence="1">In the central section; belongs to the 3-hydroxyacyl-CoA dehydrogenase family.</text>
</comment>
<name>FADJ_VIBPA</name>
<accession>Q87MM3</accession>
<feature type="chain" id="PRO_0000109312" description="Fatty acid oxidation complex subunit alpha">
    <location>
        <begin position="1"/>
        <end position="703"/>
    </location>
</feature>
<feature type="region of interest" description="Enoyl-CoA hydratase" evidence="1">
    <location>
        <begin position="1"/>
        <end position="190"/>
    </location>
</feature>
<feature type="region of interest" description="3-hydroxyacyl-CoA dehydrogenase" evidence="1">
    <location>
        <begin position="308"/>
        <end position="703"/>
    </location>
</feature>
<feature type="site" description="Important for catalytic activity" evidence="1">
    <location>
        <position position="118"/>
    </location>
</feature>
<feature type="site" description="Important for catalytic activity" evidence="1">
    <location>
        <position position="140"/>
    </location>
</feature>